<dbReference type="EC" id="2.8.2.-" evidence="5"/>
<dbReference type="EMBL" id="AF022729">
    <property type="protein sequence ID" value="AAB88123.1"/>
    <property type="molecule type" value="mRNA"/>
</dbReference>
<dbReference type="RefSeq" id="NP_001418789.1">
    <property type="nucleotide sequence ID" value="NM_001431860.1"/>
</dbReference>
<dbReference type="RefSeq" id="NP_001418790.1">
    <property type="nucleotide sequence ID" value="NM_001431861.1"/>
</dbReference>
<dbReference type="RefSeq" id="NP_001418791.1">
    <property type="nucleotide sequence ID" value="NM_001431862.1"/>
</dbReference>
<dbReference type="RefSeq" id="NP_001418792.1">
    <property type="nucleotide sequence ID" value="NM_001431863.1"/>
</dbReference>
<dbReference type="RefSeq" id="NP_001418793.1">
    <property type="nucleotide sequence ID" value="NM_001431864.1"/>
</dbReference>
<dbReference type="RefSeq" id="NP_536322.1">
    <property type="nucleotide sequence ID" value="NM_080397.3"/>
</dbReference>
<dbReference type="RefSeq" id="XP_006244794.1">
    <property type="nucleotide sequence ID" value="XM_006244732.3"/>
</dbReference>
<dbReference type="RefSeq" id="XP_017451739.1">
    <property type="nucleotide sequence ID" value="XM_017596250.1"/>
</dbReference>
<dbReference type="RefSeq" id="XP_017451740.1">
    <property type="nucleotide sequence ID" value="XM_017596251.1"/>
</dbReference>
<dbReference type="FunCoup" id="O54702">
    <property type="interactions" value="1427"/>
</dbReference>
<dbReference type="STRING" id="10116.ENSRNOP00000073358"/>
<dbReference type="GlyCosmos" id="O54702">
    <property type="glycosylation" value="3 sites, No reported glycans"/>
</dbReference>
<dbReference type="GlyGen" id="O54702">
    <property type="glycosylation" value="5 sites"/>
</dbReference>
<dbReference type="PhosphoSitePlus" id="O54702"/>
<dbReference type="PaxDb" id="10116-ENSRNOP00000017714"/>
<dbReference type="GeneID" id="140568"/>
<dbReference type="KEGG" id="rno:140568"/>
<dbReference type="UCSC" id="RGD:621216">
    <property type="organism name" value="rat"/>
</dbReference>
<dbReference type="AGR" id="RGD:621216"/>
<dbReference type="CTD" id="9486"/>
<dbReference type="RGD" id="621216">
    <property type="gene designation" value="Chst10"/>
</dbReference>
<dbReference type="VEuPathDB" id="HostDB:ENSRNOG00000012815"/>
<dbReference type="eggNOG" id="KOG4651">
    <property type="taxonomic scope" value="Eukaryota"/>
</dbReference>
<dbReference type="HOGENOM" id="CLU_043398_2_0_1"/>
<dbReference type="InParanoid" id="O54702"/>
<dbReference type="PhylomeDB" id="O54702"/>
<dbReference type="Reactome" id="R-RNO-975578">
    <property type="pathway name" value="Reactions specific to the complex N-glycan synthesis pathway"/>
</dbReference>
<dbReference type="UniPathway" id="UPA00353"/>
<dbReference type="PRO" id="PR:O54702"/>
<dbReference type="Proteomes" id="UP000002494">
    <property type="component" value="Chromosome 9"/>
</dbReference>
<dbReference type="Bgee" id="ENSRNOG00000012815">
    <property type="expression patterns" value="Expressed in frontal cortex and 16 other cell types or tissues"/>
</dbReference>
<dbReference type="ExpressionAtlas" id="O54702">
    <property type="expression patterns" value="baseline and differential"/>
</dbReference>
<dbReference type="GO" id="GO:0000139">
    <property type="term" value="C:Golgi membrane"/>
    <property type="evidence" value="ECO:0000314"/>
    <property type="project" value="UniProtKB"/>
</dbReference>
<dbReference type="GO" id="GO:0016232">
    <property type="term" value="F:HNK-1 sulfotransferase activity"/>
    <property type="evidence" value="ECO:0000314"/>
    <property type="project" value="RGD"/>
</dbReference>
<dbReference type="GO" id="GO:0008146">
    <property type="term" value="F:sulfotransferase activity"/>
    <property type="evidence" value="ECO:0000314"/>
    <property type="project" value="UniProtKB"/>
</dbReference>
<dbReference type="GO" id="GO:0008209">
    <property type="term" value="P:androgen metabolic process"/>
    <property type="evidence" value="ECO:0000266"/>
    <property type="project" value="RGD"/>
</dbReference>
<dbReference type="GO" id="GO:0016051">
    <property type="term" value="P:carbohydrate biosynthetic process"/>
    <property type="evidence" value="ECO:0007669"/>
    <property type="project" value="InterPro"/>
</dbReference>
<dbReference type="GO" id="GO:0008210">
    <property type="term" value="P:estrogen metabolic process"/>
    <property type="evidence" value="ECO:0000266"/>
    <property type="project" value="RGD"/>
</dbReference>
<dbReference type="GO" id="GO:0007612">
    <property type="term" value="P:learning"/>
    <property type="evidence" value="ECO:0000266"/>
    <property type="project" value="RGD"/>
</dbReference>
<dbReference type="GO" id="GO:0007616">
    <property type="term" value="P:long-term memory"/>
    <property type="evidence" value="ECO:0000266"/>
    <property type="project" value="RGD"/>
</dbReference>
<dbReference type="GO" id="GO:0030166">
    <property type="term" value="P:proteoglycan biosynthetic process"/>
    <property type="evidence" value="ECO:0000318"/>
    <property type="project" value="GO_Central"/>
</dbReference>
<dbReference type="InterPro" id="IPR018011">
    <property type="entry name" value="Carb_sulfotrans_8-10"/>
</dbReference>
<dbReference type="InterPro" id="IPR005331">
    <property type="entry name" value="Sulfotransferase"/>
</dbReference>
<dbReference type="PANTHER" id="PTHR12137">
    <property type="entry name" value="CARBOHYDRATE SULFOTRANSFERASE"/>
    <property type="match status" value="1"/>
</dbReference>
<dbReference type="PANTHER" id="PTHR12137:SF2">
    <property type="entry name" value="CARBOHYDRATE SULFOTRANSFERASE 10"/>
    <property type="match status" value="1"/>
</dbReference>
<dbReference type="Pfam" id="PF03567">
    <property type="entry name" value="Sulfotransfer_2"/>
    <property type="match status" value="1"/>
</dbReference>
<gene>
    <name type="primary">Chst10</name>
</gene>
<reference key="1">
    <citation type="journal article" date="1997" name="J. Biol. Chem.">
        <title>Expression cloning of a cDNA encoding a sulfotransferase involved in the biosynthesis of the HNK-1 carbohydrate epitope.</title>
        <authorList>
            <person name="Bakker H."/>
            <person name="Friedmann I."/>
            <person name="Oka S."/>
            <person name="Kawasaki T."/>
            <person name="Nifant'ev N."/>
            <person name="Schachner M."/>
            <person name="Mantei N."/>
        </authorList>
    </citation>
    <scope>NUCLEOTIDE SEQUENCE [MRNA]</scope>
    <scope>FUNCTION</scope>
    <source>
        <strain>Sprague-Dawley</strain>
        <tissue>Brain cortex</tissue>
    </source>
</reference>
<reference key="2">
    <citation type="journal article" date="2000" name="Mech. Dev.">
        <title>Differential expression of two glucuronyltransferases synthesizing HNK-1 carbohydrate epitope in the sublineages of the rat myogenic progenitors.</title>
        <authorList>
            <person name="Nagase T."/>
            <person name="Shimoda Y."/>
            <person name="Sanai Y."/>
            <person name="Nakamura S."/>
            <person name="Harii K."/>
            <person name="Osumi N."/>
        </authorList>
    </citation>
    <scope>TISSUE SPECIFICITY</scope>
</reference>
<reference key="3">
    <citation type="journal article" date="2013" name="Glycobiology">
        <title>HNK-1 sulfotransferase-dependent sulfation regulating laminin-binding glycans occurs in the post-phosphoryl moiety on alpha-dystroglycan.</title>
        <authorList>
            <person name="Nakagawa N."/>
            <person name="Takematsu H."/>
            <person name="Oka S."/>
        </authorList>
    </citation>
    <scope>FUNCTION</scope>
    <scope>CATALYTIC ACTIVITY</scope>
    <scope>SUBCELLULAR LOCATION</scope>
</reference>
<organism>
    <name type="scientific">Rattus norvegicus</name>
    <name type="common">Rat</name>
    <dbReference type="NCBI Taxonomy" id="10116"/>
    <lineage>
        <taxon>Eukaryota</taxon>
        <taxon>Metazoa</taxon>
        <taxon>Chordata</taxon>
        <taxon>Craniata</taxon>
        <taxon>Vertebrata</taxon>
        <taxon>Euteleostomi</taxon>
        <taxon>Mammalia</taxon>
        <taxon>Eutheria</taxon>
        <taxon>Euarchontoglires</taxon>
        <taxon>Glires</taxon>
        <taxon>Rodentia</taxon>
        <taxon>Myomorpha</taxon>
        <taxon>Muroidea</taxon>
        <taxon>Muridae</taxon>
        <taxon>Murinae</taxon>
        <taxon>Rattus</taxon>
    </lineage>
</organism>
<feature type="chain" id="PRO_0000189660" description="Carbohydrate sulfotransferase 10">
    <location>
        <begin position="1"/>
        <end position="356"/>
    </location>
</feature>
<feature type="topological domain" description="Cytoplasmic" evidence="3">
    <location>
        <begin position="1"/>
        <end position="6"/>
    </location>
</feature>
<feature type="transmembrane region" description="Helical; Signal-anchor for type II membrane protein" evidence="3">
    <location>
        <begin position="7"/>
        <end position="27"/>
    </location>
</feature>
<feature type="topological domain" description="Lumenal" evidence="3">
    <location>
        <begin position="28"/>
        <end position="356"/>
    </location>
</feature>
<feature type="binding site" evidence="1">
    <location>
        <begin position="127"/>
        <end position="133"/>
    </location>
    <ligand>
        <name>3'-phosphoadenylyl sulfate</name>
        <dbReference type="ChEBI" id="CHEBI:58339"/>
    </ligand>
</feature>
<feature type="binding site" evidence="1">
    <location>
        <begin position="189"/>
        <end position="197"/>
    </location>
    <ligand>
        <name>3'-phosphoadenylyl sulfate</name>
        <dbReference type="ChEBI" id="CHEBI:58339"/>
    </ligand>
</feature>
<feature type="glycosylation site" description="N-linked (GlcNAc...) asparagine" evidence="3">
    <location>
        <position position="99"/>
    </location>
</feature>
<feature type="glycosylation site" description="N-linked (GlcNAc...) asparagine" evidence="3">
    <location>
        <position position="228"/>
    </location>
</feature>
<feature type="glycosylation site" description="N-linked (GlcNAc...) asparagine" evidence="3">
    <location>
        <position position="316"/>
    </location>
</feature>
<proteinExistence type="evidence at protein level"/>
<keyword id="KW-0119">Carbohydrate metabolism</keyword>
<keyword id="KW-0325">Glycoprotein</keyword>
<keyword id="KW-0333">Golgi apparatus</keyword>
<keyword id="KW-0443">Lipid metabolism</keyword>
<keyword id="KW-0472">Membrane</keyword>
<keyword id="KW-1185">Reference proteome</keyword>
<keyword id="KW-0735">Signal-anchor</keyword>
<keyword id="KW-0753">Steroid metabolism</keyword>
<keyword id="KW-0808">Transferase</keyword>
<keyword id="KW-0812">Transmembrane</keyword>
<keyword id="KW-1133">Transmembrane helix</keyword>
<name>CHSTA_RAT</name>
<accession>O54702</accession>
<comment type="function">
    <text evidence="2 5 6">Catalyzes the transfer of sulfate from 3'-phosphoadenylyl sulfate (PAPS) to position 3 of terminal glucuronic acid of both protein- and lipid-linked oligosaccharides. Participates in biosynthesis of HNK-1 carbohydrate structure 3-O-sulfo-beta-D-GlcA-(1-&gt;3)-beta-D-Gal-(1-&gt;4)-D-GlcNAc-R, a sulfated glucuronyl-lactosaminyl residue carried by many neural recognition molecules, which is involved in cell interactions during ontogenetic development and in synaptic plasticity in the adult. May be indirectly involved in synapse plasticity of the hippocampus, via its role in HNK-1 biosynthesis (PubMed:9368071). Sulfates terminal glucuronyl residue of the laminin globular (LG)-domain binding epitope on DAG1/alpha-dystroglycan and prevents further polymerization by LARGE1 glycosyltransferase. Likely defines the chain length of LG epitope, conferring binding specificity to extracellular matrix components (PubMed:23723439). Plays a role in down-regulating the steroid hormones. Sulfates glucuronidated estrogens and androgens with an impact in hormone cycle and fertility. Has a preference for glucuronyl moiety at the 3-hydroxyl group of a sterol ring rather than the 17-hydroxyl group, showing high catalytic efficiency for 17beta-estradiol 3-O-(beta-D-glucuronate) and dehydroepiandrosterone 3-O-(beta-D-glucuronate) hormones (By similarity).</text>
</comment>
<comment type="catalytic activity">
    <reaction evidence="5">
        <text>3-O-{beta-D-GlcA-(1-&gt;[3)-alpha-D-Xyl-(1-&gt;3)-beta-D-GlcA-(1-&gt;](n)-4)-beta-D-Xyl-(1-&gt;4)-Rib-ol-P-Rib-ol-P-3-beta-D-GalNAc-(1-&gt;3)-beta-D-GlcNAc-(1-&gt;4)-O-6-P-alpha-D-Man}-L-Thr-[protein] + 3'-phosphoadenylyl sulfate = 3-O-{O-3-S-beta-D-GlcA-(1-&gt;[3)-alpha-D-Xyl-(1-&gt;3)-beta-D-GlcA-(1-&gt;](n)-4)-beta-D-Xyl-(1-&gt;4)-Rib-ol-P-Rib-ol-P-3-beta-D-GalNAc-(1-&gt;3)-beta-D-GlcNAc-(1-&gt;4)-O-6-P-alpha-D-Man}-L-Thr-[protein] + adenosine 3',5'-bisphosphate + H(+)</text>
        <dbReference type="Rhea" id="RHEA:68304"/>
        <dbReference type="Rhea" id="RHEA-COMP:17486"/>
        <dbReference type="Rhea" id="RHEA-COMP:17487"/>
        <dbReference type="ChEBI" id="CHEBI:15378"/>
        <dbReference type="ChEBI" id="CHEBI:58339"/>
        <dbReference type="ChEBI" id="CHEBI:58343"/>
        <dbReference type="ChEBI" id="CHEBI:177355"/>
        <dbReference type="ChEBI" id="CHEBI:177363"/>
    </reaction>
    <physiologicalReaction direction="left-to-right" evidence="9">
        <dbReference type="Rhea" id="RHEA:68305"/>
    </physiologicalReaction>
</comment>
<comment type="catalytic activity">
    <reaction evidence="2">
        <text>17beta-estradiol 3-O-(beta-D-glucuronate) + 3'-phosphoadenylyl sulfate = 17beta-estradiol 3-O-(3-sulfo-beta-D-glucuronate) + adenosine 3',5'-bisphosphate + H(+)</text>
        <dbReference type="Rhea" id="RHEA:68696"/>
        <dbReference type="ChEBI" id="CHEBI:15378"/>
        <dbReference type="ChEBI" id="CHEBI:58339"/>
        <dbReference type="ChEBI" id="CHEBI:58343"/>
        <dbReference type="ChEBI" id="CHEBI:136641"/>
        <dbReference type="ChEBI" id="CHEBI:178093"/>
    </reaction>
    <physiologicalReaction direction="left-to-right" evidence="2">
        <dbReference type="Rhea" id="RHEA:68697"/>
    </physiologicalReaction>
</comment>
<comment type="catalytic activity">
    <reaction evidence="2">
        <text>17beta-estradiol 3-O-(beta-D-glucuronate) 17-sulfate + 3'-phosphoadenylyl sulfate = 17beta-estradiol 3-O-(3-sulfo-beta-D-glucuronate) 17-sulfate + adenosine 3',5'-bisphosphate + H(+)</text>
        <dbReference type="Rhea" id="RHEA:68660"/>
        <dbReference type="ChEBI" id="CHEBI:15378"/>
        <dbReference type="ChEBI" id="CHEBI:58339"/>
        <dbReference type="ChEBI" id="CHEBI:58343"/>
        <dbReference type="ChEBI" id="CHEBI:178094"/>
        <dbReference type="ChEBI" id="CHEBI:178095"/>
    </reaction>
    <physiologicalReaction direction="left-to-right" evidence="2">
        <dbReference type="Rhea" id="RHEA:68661"/>
    </physiologicalReaction>
</comment>
<comment type="catalytic activity">
    <reaction evidence="2">
        <text>17beta-estradiol 17-O-(beta-D-glucuronate) + 3'-phosphoadenylyl sulfate = 17beta-estradiol 17-O-(3-sulfo-beta-D-glucuronate) + adenosine 3',5'-bisphosphate + H(+)</text>
        <dbReference type="Rhea" id="RHEA:68664"/>
        <dbReference type="ChEBI" id="CHEBI:15378"/>
        <dbReference type="ChEBI" id="CHEBI:58339"/>
        <dbReference type="ChEBI" id="CHEBI:58343"/>
        <dbReference type="ChEBI" id="CHEBI:82961"/>
        <dbReference type="ChEBI" id="CHEBI:178096"/>
    </reaction>
    <physiologicalReaction direction="left-to-right" evidence="2">
        <dbReference type="Rhea" id="RHEA:68665"/>
    </physiologicalReaction>
</comment>
<comment type="catalytic activity">
    <reaction evidence="2">
        <text>16alpha,17beta-estriol 3-O-(beta-D-glucuronate) + 3'-phosphoadenylyl sulfate = 16alpha,17beta-estriol 3-O-(3-sulfo-beta-D-glucuronate) + adenosine 3',5'-bisphosphate + H(+)</text>
        <dbReference type="Rhea" id="RHEA:68668"/>
        <dbReference type="ChEBI" id="CHEBI:15378"/>
        <dbReference type="ChEBI" id="CHEBI:58339"/>
        <dbReference type="ChEBI" id="CHEBI:58343"/>
        <dbReference type="ChEBI" id="CHEBI:136649"/>
        <dbReference type="ChEBI" id="CHEBI:178097"/>
    </reaction>
    <physiologicalReaction direction="left-to-right" evidence="2">
        <dbReference type="Rhea" id="RHEA:68669"/>
    </physiologicalReaction>
</comment>
<comment type="catalytic activity">
    <reaction evidence="2">
        <text>16alpha,17beta-estriol 16-O-(beta-D-glucuronate) + 3'-phosphoadenylyl sulfate = 16alpha,17beta-estriol 16-O-(3-sulfo-beta-D-glucuronate) + adenosine 3',5'-bisphosphate + H(+)</text>
        <dbReference type="Rhea" id="RHEA:68672"/>
        <dbReference type="ChEBI" id="CHEBI:15378"/>
        <dbReference type="ChEBI" id="CHEBI:58339"/>
        <dbReference type="ChEBI" id="CHEBI:58343"/>
        <dbReference type="ChEBI" id="CHEBI:136650"/>
        <dbReference type="ChEBI" id="CHEBI:178098"/>
    </reaction>
    <physiologicalReaction direction="left-to-right" evidence="2">
        <dbReference type="Rhea" id="RHEA:68673"/>
    </physiologicalReaction>
</comment>
<comment type="catalytic activity">
    <reaction evidence="2">
        <text>16alpha,17beta-estriol 17-O-(beta-D-glucuronate) + 3'-phosphoadenylyl sulfate = 16alpha,17beta-estriol 17-O-(3-sulfo-beta-D-glucuronate) + adenosine 3',5'-bisphosphate + H(+)</text>
        <dbReference type="Rhea" id="RHEA:68700"/>
        <dbReference type="ChEBI" id="CHEBI:15378"/>
        <dbReference type="ChEBI" id="CHEBI:58339"/>
        <dbReference type="ChEBI" id="CHEBI:58343"/>
        <dbReference type="ChEBI" id="CHEBI:178099"/>
        <dbReference type="ChEBI" id="CHEBI:178100"/>
    </reaction>
    <physiologicalReaction direction="left-to-right" evidence="2">
        <dbReference type="Rhea" id="RHEA:68701"/>
    </physiologicalReaction>
</comment>
<comment type="catalytic activity">
    <reaction evidence="2">
        <text>estrone 3-O-(beta-D-glucuronate) + 3'-phosphoadenylyl sulfate = estrone 3-O-(3-sulfo-beta-D-glucuronate) + adenosine 3',5'-bisphosphate + H(+)</text>
        <dbReference type="Rhea" id="RHEA:68676"/>
        <dbReference type="ChEBI" id="CHEBI:15378"/>
        <dbReference type="ChEBI" id="CHEBI:58339"/>
        <dbReference type="ChEBI" id="CHEBI:58343"/>
        <dbReference type="ChEBI" id="CHEBI:136634"/>
        <dbReference type="ChEBI" id="CHEBI:178101"/>
    </reaction>
    <physiologicalReaction direction="left-to-right" evidence="2">
        <dbReference type="Rhea" id="RHEA:68677"/>
    </physiologicalReaction>
</comment>
<comment type="catalytic activity">
    <reaction evidence="2">
        <text>3alpha,20alpha-dihydroxy-5beta-pregnane 3-O-(beta-D-glucuronate) + 3'-phosphoadenylyl sulfate = 3alpha,20alpha-dihydroxy-5beta-pregnane 3-O-(3-sulfo-beta-D-glucuronate) + adenosine 3',5'-bisphosphate + H(+)</text>
        <dbReference type="Rhea" id="RHEA:68680"/>
        <dbReference type="ChEBI" id="CHEBI:15378"/>
        <dbReference type="ChEBI" id="CHEBI:58339"/>
        <dbReference type="ChEBI" id="CHEBI:58343"/>
        <dbReference type="ChEBI" id="CHEBI:178102"/>
        <dbReference type="ChEBI" id="CHEBI:178103"/>
    </reaction>
    <physiologicalReaction direction="left-to-right" evidence="2">
        <dbReference type="Rhea" id="RHEA:68681"/>
    </physiologicalReaction>
</comment>
<comment type="catalytic activity">
    <reaction evidence="2">
        <text>testosterone 17-O-(beta-D-glucuronate) + 3'-phosphoadenylyl sulfate = testosterone 17-O-(3-sulfo-beta-D-glucuronate) + adenosine 3',5'-bisphosphate + H(+)</text>
        <dbReference type="Rhea" id="RHEA:68684"/>
        <dbReference type="ChEBI" id="CHEBI:15378"/>
        <dbReference type="ChEBI" id="CHEBI:58339"/>
        <dbReference type="ChEBI" id="CHEBI:58343"/>
        <dbReference type="ChEBI" id="CHEBI:136639"/>
        <dbReference type="ChEBI" id="CHEBI:178104"/>
    </reaction>
    <physiologicalReaction direction="left-to-right" evidence="2">
        <dbReference type="Rhea" id="RHEA:68685"/>
    </physiologicalReaction>
</comment>
<comment type="catalytic activity">
    <reaction evidence="2">
        <text>3beta-androst-5-en-17-one 3-O-(beta-D-glucuronate) + 3'-phosphoadenylyl sulfate = 3beta-androst-5-en-17-one 3-O-(3-sulfo-beta-D-glucuronate) + adenosine 3',5'-bisphosphate + H(+)</text>
        <dbReference type="Rhea" id="RHEA:68688"/>
        <dbReference type="ChEBI" id="CHEBI:15378"/>
        <dbReference type="ChEBI" id="CHEBI:58339"/>
        <dbReference type="ChEBI" id="CHEBI:58343"/>
        <dbReference type="ChEBI" id="CHEBI:178105"/>
        <dbReference type="ChEBI" id="CHEBI:178106"/>
    </reaction>
    <physiologicalReaction direction="left-to-right" evidence="2">
        <dbReference type="Rhea" id="RHEA:68689"/>
    </physiologicalReaction>
</comment>
<comment type="catalytic activity">
    <reaction evidence="2">
        <text>3alpha,17alpha-dihydroxy-5beta-androstane-11-one-17beta-carboxylate 3-O-(beta-D-glucuronate) + 3'-phosphoadenylyl sulfate = 3alpha,17alpha-dihydroxy-5beta-androstane-11-one-17beta-carboxylate 3-O-(3-sulfo-beta-D-glucuronate) + adenosine 3',5'-bisphosphate + H(+)</text>
        <dbReference type="Rhea" id="RHEA:68692"/>
        <dbReference type="ChEBI" id="CHEBI:15378"/>
        <dbReference type="ChEBI" id="CHEBI:58339"/>
        <dbReference type="ChEBI" id="CHEBI:58343"/>
        <dbReference type="ChEBI" id="CHEBI:178107"/>
        <dbReference type="ChEBI" id="CHEBI:178108"/>
    </reaction>
    <physiologicalReaction direction="left-to-right" evidence="2">
        <dbReference type="Rhea" id="RHEA:68693"/>
    </physiologicalReaction>
</comment>
<comment type="catalytic activity">
    <reaction evidence="2">
        <text>3alpha-hydroxyetiocholan-17-one 3-O-(beta-D-glucuronate) + 3'-phosphoadenylyl sulfate = 3alpha-hydroxyetiocholan-17-one 3-O-(3-sulfo-beta-D-glucuronate) + adenosine 3',5'-bisphosphate + H(+)</text>
        <dbReference type="Rhea" id="RHEA:68704"/>
        <dbReference type="ChEBI" id="CHEBI:15378"/>
        <dbReference type="ChEBI" id="CHEBI:58339"/>
        <dbReference type="ChEBI" id="CHEBI:58343"/>
        <dbReference type="ChEBI" id="CHEBI:178197"/>
        <dbReference type="ChEBI" id="CHEBI:178198"/>
    </reaction>
    <physiologicalReaction direction="left-to-right" evidence="2">
        <dbReference type="Rhea" id="RHEA:68705"/>
    </physiologicalReaction>
</comment>
<comment type="pathway">
    <text evidence="2">Steroid metabolism.</text>
</comment>
<comment type="pathway">
    <text evidence="2">Protein modification; carbohydrate sulfation.</text>
</comment>
<comment type="subcellular location">
    <subcellularLocation>
        <location evidence="5">Golgi apparatus membrane</location>
        <topology evidence="3">Single-pass type II membrane protein</topology>
    </subcellularLocation>
</comment>
<comment type="tissue specificity">
    <text evidence="4">In myogenic progenitors, it is ubiquitously expressed.</text>
</comment>
<comment type="similarity">
    <text evidence="8">Belongs to the sulfotransferase 2 family.</text>
</comment>
<sequence length="356" mass="42027">MHHQWLLLAACFWVIFMFMVASKFITLTFKDPDGYSAKQEFVFLTAMPEAEKLRGEKHFSEVMKPTGKMLSESHPDQPPVYLERLELIRNACKEEALRNLSHTEVSKFVLDRIFVCDKHKILFCQTPKVGNTQWKKVLIVLNGAFSSIEEIPENVVHDHEKNGLPRLSSFSKIGIQKRLKTYFKFFIVRDPFERLISAFKDKFVHNPRFEPWYRHEIAPGIIRKYRKNRTETRGIQFEDFVRYLGDPNRRWLDLQFGDHIIHWVTYVKLCAPCEIKYSVIGHHETLEADAPYILKEAGIDHLVSYPTIPPGITMYNRTKVEQYFLGISKRDIRRLYARFEGDFKLFGYQKPDFLLN</sequence>
<protein>
    <recommendedName>
        <fullName>Carbohydrate sulfotransferase 10</fullName>
        <ecNumber evidence="5">2.8.2.-</ecNumber>
    </recommendedName>
    <alternativeName>
        <fullName evidence="7">HNK-1 sulfotransferase</fullName>
        <shortName>HNK-1ST</shortName>
        <shortName>HNK1ST</shortName>
        <shortName>RaHNK-1ST</shortName>
        <shortName>Sul-T</shortName>
    </alternativeName>
</protein>
<evidence type="ECO:0000250" key="1"/>
<evidence type="ECO:0000250" key="2">
    <source>
        <dbReference type="UniProtKB" id="O43529"/>
    </source>
</evidence>
<evidence type="ECO:0000255" key="3"/>
<evidence type="ECO:0000269" key="4">
    <source>
    </source>
</evidence>
<evidence type="ECO:0000269" key="5">
    <source>
    </source>
</evidence>
<evidence type="ECO:0000269" key="6">
    <source>
    </source>
</evidence>
<evidence type="ECO:0000303" key="7">
    <source>
    </source>
</evidence>
<evidence type="ECO:0000305" key="8"/>
<evidence type="ECO:0000305" key="9">
    <source>
    </source>
</evidence>